<reference key="1">
    <citation type="submission" date="2004-03" db="EMBL/GenBank/DDBJ databases">
        <title>Yeast two hybrid screen of sheep endometrium cDNA library.</title>
        <authorList>
            <person name="Wang S.-Z."/>
            <person name="Roberts R.M."/>
        </authorList>
    </citation>
    <scope>NUCLEOTIDE SEQUENCE [MRNA]</scope>
    <source>
        <tissue>Endometrium</tissue>
    </source>
</reference>
<proteinExistence type="evidence at transcript level"/>
<accession>P0C276</accession>
<accession>O46543</accession>
<accession>Q6Q310</accession>
<name>RL40_SHEEP</name>
<dbReference type="EMBL" id="AY563026">
    <property type="protein sequence ID" value="AAS72379.1"/>
    <property type="molecule type" value="mRNA"/>
</dbReference>
<dbReference type="RefSeq" id="NP_001009286.1">
    <property type="nucleotide sequence ID" value="NM_001009286.1"/>
</dbReference>
<dbReference type="RefSeq" id="XP_012032971.1">
    <property type="nucleotide sequence ID" value="XM_012177581.3"/>
</dbReference>
<dbReference type="RefSeq" id="XP_042105331.1">
    <property type="nucleotide sequence ID" value="XM_042249397.1"/>
</dbReference>
<dbReference type="BMRB" id="P0C276"/>
<dbReference type="SMR" id="P0C276"/>
<dbReference type="STRING" id="9940.ENSOARP00000012368"/>
<dbReference type="PaxDb" id="9940-ENSOARP00000012368"/>
<dbReference type="Ensembl" id="ENSOART00225088845">
    <property type="protein sequence ID" value="ENSOARP00225047049"/>
    <property type="gene ID" value="ENSOARG00225053205"/>
</dbReference>
<dbReference type="GeneID" id="443296"/>
<dbReference type="KEGG" id="oas:443296"/>
<dbReference type="CTD" id="7311"/>
<dbReference type="eggNOG" id="KOG0003">
    <property type="taxonomic scope" value="Eukaryota"/>
</dbReference>
<dbReference type="HOGENOM" id="CLU_010412_3_4_1"/>
<dbReference type="OMA" id="CGRCSQL"/>
<dbReference type="OrthoDB" id="428577at2759"/>
<dbReference type="Proteomes" id="UP000002356">
    <property type="component" value="Chromosome 5"/>
</dbReference>
<dbReference type="Bgee" id="ENSOARG00000011540">
    <property type="expression patterns" value="Expressed in leukocyte and 52 other cell types or tissues"/>
</dbReference>
<dbReference type="GO" id="GO:0022625">
    <property type="term" value="C:cytosolic large ribosomal subunit"/>
    <property type="evidence" value="ECO:0007669"/>
    <property type="project" value="Ensembl"/>
</dbReference>
<dbReference type="GO" id="GO:0005634">
    <property type="term" value="C:nucleus"/>
    <property type="evidence" value="ECO:0007669"/>
    <property type="project" value="UniProtKB-SubCell"/>
</dbReference>
<dbReference type="GO" id="GO:0045202">
    <property type="term" value="C:synapse"/>
    <property type="evidence" value="ECO:0007669"/>
    <property type="project" value="Ensembl"/>
</dbReference>
<dbReference type="GO" id="GO:0003735">
    <property type="term" value="F:structural constituent of ribosome"/>
    <property type="evidence" value="ECO:0007669"/>
    <property type="project" value="Ensembl"/>
</dbReference>
<dbReference type="GO" id="GO:0006412">
    <property type="term" value="P:translation"/>
    <property type="evidence" value="ECO:0007669"/>
    <property type="project" value="InterPro"/>
</dbReference>
<dbReference type="CDD" id="cd01803">
    <property type="entry name" value="Ubl_ubiquitin"/>
    <property type="match status" value="1"/>
</dbReference>
<dbReference type="FunFam" id="3.10.20.90:FF:000014">
    <property type="entry name" value="Ubiquitin-60S ribosomal L40 fusion"/>
    <property type="match status" value="1"/>
</dbReference>
<dbReference type="FunFam" id="4.10.1060.50:FF:000001">
    <property type="entry name" value="ubiquitin-60S ribosomal protein L40"/>
    <property type="match status" value="1"/>
</dbReference>
<dbReference type="Gene3D" id="4.10.1060.50">
    <property type="match status" value="1"/>
</dbReference>
<dbReference type="Gene3D" id="3.10.20.90">
    <property type="entry name" value="Phosphatidylinositol 3-kinase Catalytic Subunit, Chain A, domain 1"/>
    <property type="match status" value="1"/>
</dbReference>
<dbReference type="InterPro" id="IPR001975">
    <property type="entry name" value="Ribosomal_eL40_dom"/>
</dbReference>
<dbReference type="InterPro" id="IPR038587">
    <property type="entry name" value="Ribosomal_eL40_sf"/>
</dbReference>
<dbReference type="InterPro" id="IPR000626">
    <property type="entry name" value="Ubiquitin-like_dom"/>
</dbReference>
<dbReference type="InterPro" id="IPR029071">
    <property type="entry name" value="Ubiquitin-like_domsf"/>
</dbReference>
<dbReference type="InterPro" id="IPR019954">
    <property type="entry name" value="Ubiquitin_CS"/>
</dbReference>
<dbReference type="InterPro" id="IPR019956">
    <property type="entry name" value="Ubiquitin_dom"/>
</dbReference>
<dbReference type="InterPro" id="IPR050158">
    <property type="entry name" value="Ubiquitin_ubiquitin-like"/>
</dbReference>
<dbReference type="PANTHER" id="PTHR10666">
    <property type="entry name" value="UBIQUITIN"/>
    <property type="match status" value="1"/>
</dbReference>
<dbReference type="Pfam" id="PF01020">
    <property type="entry name" value="Ribosomal_L40e"/>
    <property type="match status" value="1"/>
</dbReference>
<dbReference type="Pfam" id="PF00240">
    <property type="entry name" value="ubiquitin"/>
    <property type="match status" value="1"/>
</dbReference>
<dbReference type="PRINTS" id="PR00348">
    <property type="entry name" value="UBIQUITIN"/>
</dbReference>
<dbReference type="SMART" id="SM01377">
    <property type="entry name" value="Ribosomal_L40e"/>
    <property type="match status" value="1"/>
</dbReference>
<dbReference type="SMART" id="SM00213">
    <property type="entry name" value="UBQ"/>
    <property type="match status" value="1"/>
</dbReference>
<dbReference type="SUPFAM" id="SSF54236">
    <property type="entry name" value="Ubiquitin-like"/>
    <property type="match status" value="1"/>
</dbReference>
<dbReference type="PROSITE" id="PS00299">
    <property type="entry name" value="UBIQUITIN_1"/>
    <property type="match status" value="1"/>
</dbReference>
<dbReference type="PROSITE" id="PS50053">
    <property type="entry name" value="UBIQUITIN_2"/>
    <property type="match status" value="1"/>
</dbReference>
<protein>
    <recommendedName>
        <fullName evidence="6">Ubiquitin-ribosomal protein eL40 fusion protein</fullName>
    </recommendedName>
    <alternativeName>
        <fullName>Ubiquitin A-52 residue ribosomal protein fusion product 1</fullName>
    </alternativeName>
    <component>
        <recommendedName>
            <fullName>Ubiquitin</fullName>
        </recommendedName>
    </component>
    <component>
        <recommendedName>
            <fullName evidence="6">Large ribosomal subunit protein eL40</fullName>
        </recommendedName>
        <alternativeName>
            <fullName>60S ribosomal protein L40</fullName>
        </alternativeName>
        <alternativeName>
            <fullName>CEP52</fullName>
        </alternativeName>
    </component>
</protein>
<sequence>MQIFVKTLTGKTITLEVEPSDTIENVKAKIQDKEGIPPDQQRLIFAGKQLEDGRTLSDYNIQKESTLHLVLRLRGGIIEPSLRQLAQKYNCDKMICRKCYARLHPRAVNCRKKKCGHTNNLRPKKKVK</sequence>
<gene>
    <name type="primary">UBA52</name>
    <name type="synonym">UBCEP2</name>
</gene>
<evidence type="ECO:0000250" key="1"/>
<evidence type="ECO:0000250" key="2">
    <source>
        <dbReference type="UniProtKB" id="P62984"/>
    </source>
</evidence>
<evidence type="ECO:0000250" key="3">
    <source>
        <dbReference type="UniProtKB" id="P62986"/>
    </source>
</evidence>
<evidence type="ECO:0000250" key="4">
    <source>
        <dbReference type="UniProtKB" id="P62987"/>
    </source>
</evidence>
<evidence type="ECO:0000255" key="5">
    <source>
        <dbReference type="PROSITE-ProRule" id="PRU00214"/>
    </source>
</evidence>
<evidence type="ECO:0000305" key="6"/>
<keyword id="KW-0013">ADP-ribosylation</keyword>
<keyword id="KW-0963">Cytoplasm</keyword>
<keyword id="KW-1017">Isopeptide bond</keyword>
<keyword id="KW-0488">Methylation</keyword>
<keyword id="KW-0539">Nucleus</keyword>
<keyword id="KW-0597">Phosphoprotein</keyword>
<keyword id="KW-1185">Reference proteome</keyword>
<keyword id="KW-0687">Ribonucleoprotein</keyword>
<keyword id="KW-0689">Ribosomal protein</keyword>
<keyword id="KW-0832">Ubl conjugation</keyword>
<organism>
    <name type="scientific">Ovis aries</name>
    <name type="common">Sheep</name>
    <dbReference type="NCBI Taxonomy" id="9940"/>
    <lineage>
        <taxon>Eukaryota</taxon>
        <taxon>Metazoa</taxon>
        <taxon>Chordata</taxon>
        <taxon>Craniata</taxon>
        <taxon>Vertebrata</taxon>
        <taxon>Euteleostomi</taxon>
        <taxon>Mammalia</taxon>
        <taxon>Eutheria</taxon>
        <taxon>Laurasiatheria</taxon>
        <taxon>Artiodactyla</taxon>
        <taxon>Ruminantia</taxon>
        <taxon>Pecora</taxon>
        <taxon>Bovidae</taxon>
        <taxon>Caprinae</taxon>
        <taxon>Ovis</taxon>
    </lineage>
</organism>
<feature type="chain" id="PRO_0000396440" description="Ubiquitin">
    <location>
        <begin position="1"/>
        <end position="76"/>
    </location>
</feature>
<feature type="chain" id="PRO_0000265745" description="Large ribosomal subunit protein eL40">
    <location>
        <begin position="77"/>
        <end position="128"/>
    </location>
</feature>
<feature type="domain" description="Ubiquitin-like" evidence="5">
    <location>
        <begin position="1"/>
        <end position="76"/>
    </location>
</feature>
<feature type="site" description="Interacts with activating enzyme">
    <location>
        <position position="54"/>
    </location>
</feature>
<feature type="site" description="Essential for function">
    <location>
        <position position="68"/>
    </location>
</feature>
<feature type="site" description="Interacts with activating enzyme">
    <location>
        <position position="72"/>
    </location>
</feature>
<feature type="modified residue" description="Phosphoserine; by PINK1" evidence="4">
    <location>
        <position position="65"/>
    </location>
</feature>
<feature type="modified residue" description="ADP-ribosylglycine" evidence="4">
    <location>
        <position position="76"/>
    </location>
</feature>
<feature type="modified residue" description="N6,N6,N6-trimethyllysine" evidence="3">
    <location>
        <position position="98"/>
    </location>
</feature>
<feature type="cross-link" description="Glycyl lysine isopeptide (Lys-Gly) (interchain with G-Cter in ubiquitin)" evidence="4">
    <location>
        <position position="6"/>
    </location>
</feature>
<feature type="cross-link" description="Glycyl lysine isopeptide (Lys-Gly) (interchain with G-Cter in ubiquitin)" evidence="4">
    <location>
        <position position="11"/>
    </location>
</feature>
<feature type="cross-link" description="Glycyl lysine isopeptide (Lys-Gly) (interchain with G-Cter in ubiquitin)" evidence="4">
    <location>
        <position position="27"/>
    </location>
</feature>
<feature type="cross-link" description="Glycyl lysine isopeptide (Lys-Gly) (interchain with G-Cter in ubiquitin)" evidence="4">
    <location>
        <position position="29"/>
    </location>
</feature>
<feature type="cross-link" description="Glycyl lysine isopeptide (Lys-Gly) (interchain with G-Cter in ubiquitin)" evidence="4">
    <location>
        <position position="33"/>
    </location>
</feature>
<feature type="cross-link" description="Glycyl lysine isopeptide (Lys-Gly) (interchain with G-Cter in ubiquitin)" evidence="4">
    <location>
        <position position="48"/>
    </location>
</feature>
<feature type="cross-link" description="Glycyl lysine isopeptide (Lys-Gly) (interchain with G-Cter in ubiquitin)" evidence="4">
    <location>
        <position position="63"/>
    </location>
</feature>
<feature type="cross-link" description="Glycyl lysine isopeptide (Gly-Lys) (interchain with K-? in acceptor proteins)" evidence="5">
    <location>
        <position position="76"/>
    </location>
</feature>
<comment type="function">
    <molecule>Ubiquitin</molecule>
    <text evidence="4">Exists either covalently attached to another protein, or free (unanchored). When covalently bound, it is conjugated to target proteins via an isopeptide bond either as a monomer (monoubiquitin), a polymer linked via different Lys residues of the ubiquitin (polyubiquitin chains) or a linear polymer linked via the initiator Met of the ubiquitin (linear polyubiquitin chains). Polyubiquitin chains, when attached to a target protein, have different functions depending on the Lys residue of the ubiquitin that is linked: Lys-6-linked may be involved in DNA repair; Lys-11-linked is involved in ERAD (endoplasmic reticulum-associated degradation) and in cell-cycle regulation; Lys-29-linked is involved in proteotoxic stress response and cell cycle; Lys-33-linked is involved in kinase modification; Lys-48-linked is involved in protein degradation via the proteasome; Lys-63-linked is involved in endocytosis, DNA-damage responses as well as in signaling processes leading to activation of the transcription factor NF-kappa-B. Linear polymer chains formed via attachment by the initiator Met lead to cell signaling. Ubiquitin is usually conjugated to Lys residues of target proteins, however, in rare cases, conjugation to Cys or Ser residues has been observed. When polyubiquitin is free (unanchored-polyubiquitin), it also has distinct roles, such as in activation of protein kinases, and in signaling.</text>
</comment>
<comment type="function">
    <molecule>Large ribosomal subunit protein eL40</molecule>
    <text evidence="4">Component of the 60S subunit of the ribosome. Ribosomal protein L40 is essential for translation of a subset of cellular transcripts, and especially for cap-dependent translation of vesicular stomatitis virus mRNAs.</text>
</comment>
<comment type="subunit">
    <molecule>Large ribosomal subunit protein eL40</molecule>
    <text evidence="4">Part of the 60S ribosomal subunit. Interacts with UBQLN1 (via UBA domain).</text>
</comment>
<comment type="subcellular location">
    <molecule>Ubiquitin</molecule>
    <subcellularLocation>
        <location evidence="1">Cytoplasm</location>
    </subcellularLocation>
    <subcellularLocation>
        <location evidence="1">Nucleus</location>
    </subcellularLocation>
</comment>
<comment type="subcellular location">
    <molecule>Large ribosomal subunit protein eL40</molecule>
    <subcellularLocation>
        <location evidence="2">Cytoplasm</location>
    </subcellularLocation>
</comment>
<comment type="PTM">
    <molecule>Ubiquitin</molecule>
    <text evidence="4">Phosphorylated at Ser-65 by PINK1 during mitophagy. Phosphorylated ubiquitin specifically binds and activates parkin (PRKN), triggering mitophagy. Phosphorylation does not affect E1-mediated E2 charging of ubiquitin but affects discharging of E2 enzymes to form polyubiquitin chains. It also affects deubiquitination by deubiquitinase enzymes such as USP30.</text>
</comment>
<comment type="PTM">
    <molecule>Ubiquitin</molecule>
    <text evidence="4">Mono-ADP-ribosylated at the C-terminus by PARP9, a component of the PPAR9-DTX3L complex. ADP-ribosylation requires processing by E1 and E2 enzymes and prevents ubiquitin conjugation to substrates such as histones.</text>
</comment>
<comment type="PTM">
    <molecule>Large ribosomal subunit protein eL40</molecule>
    <text evidence="4">Trimethylation of Lys-98 ('Lys-22' of the mature chain) by SMYD5 promotes translation elongation and protein synthesis.</text>
</comment>
<comment type="miscellaneous">
    <text>Ubiquitin is encoded by 4 different genes. Uba52 and Rps27a genes code for a single copy of ubiquitin fused to the ribosomal proteins eL40 and eS31, respectively. UBB and UBC genes code for a polyubiquitin precursor with exact head to tail repeats, the number of repeats differ between species and strains.</text>
</comment>
<comment type="similarity">
    <text evidence="6">In the N-terminal section; belongs to the ubiquitin family.</text>
</comment>
<comment type="similarity">
    <text evidence="6">In the C-terminal section; belongs to the eukaryotic ribosomal protein eL40 family.</text>
</comment>